<feature type="chain" id="PRO_1000141853" description="Large ribosomal subunit protein uL3">
    <location>
        <begin position="1"/>
        <end position="212"/>
    </location>
</feature>
<feature type="region of interest" description="Disordered" evidence="2">
    <location>
        <begin position="130"/>
        <end position="155"/>
    </location>
</feature>
<proteinExistence type="inferred from homology"/>
<sequence length="212" mass="22761">MAVGILGTKLGMTQIFDQETGMAIPVTVVQAGPCTVTQVKTPDTDGYTAIQVGYHEVKEKALTKAEIGHLKKIDAPPLRHLKEYRLDDSSQYQLGDAIKADIFNPGDLVDVSGKSMGRGFAGYQKRHNFKRGNMTHGSKNHRLPGSTGAGTTPGRVYPGKRMAGQYGATQVTIRHLTVVRVDSDRNLILVKGAIPGKPGTLLNITPAKTVGK</sequence>
<evidence type="ECO:0000255" key="1">
    <source>
        <dbReference type="HAMAP-Rule" id="MF_01325"/>
    </source>
</evidence>
<evidence type="ECO:0000256" key="2">
    <source>
        <dbReference type="SAM" id="MobiDB-lite"/>
    </source>
</evidence>
<evidence type="ECO:0000305" key="3"/>
<dbReference type="EMBL" id="CP001287">
    <property type="protein sequence ID" value="ACK64355.1"/>
    <property type="molecule type" value="Genomic_DNA"/>
</dbReference>
<dbReference type="RefSeq" id="WP_012593632.1">
    <property type="nucleotide sequence ID" value="NC_011726.1"/>
</dbReference>
<dbReference type="SMR" id="B7K335"/>
<dbReference type="STRING" id="41431.PCC8801_0252"/>
<dbReference type="KEGG" id="cyp:PCC8801_0252"/>
<dbReference type="eggNOG" id="COG0087">
    <property type="taxonomic scope" value="Bacteria"/>
</dbReference>
<dbReference type="HOGENOM" id="CLU_044142_4_1_3"/>
<dbReference type="OrthoDB" id="9806135at2"/>
<dbReference type="Proteomes" id="UP000008204">
    <property type="component" value="Chromosome"/>
</dbReference>
<dbReference type="GO" id="GO:0022625">
    <property type="term" value="C:cytosolic large ribosomal subunit"/>
    <property type="evidence" value="ECO:0007669"/>
    <property type="project" value="TreeGrafter"/>
</dbReference>
<dbReference type="GO" id="GO:0019843">
    <property type="term" value="F:rRNA binding"/>
    <property type="evidence" value="ECO:0007669"/>
    <property type="project" value="UniProtKB-UniRule"/>
</dbReference>
<dbReference type="GO" id="GO:0003735">
    <property type="term" value="F:structural constituent of ribosome"/>
    <property type="evidence" value="ECO:0007669"/>
    <property type="project" value="InterPro"/>
</dbReference>
<dbReference type="GO" id="GO:0006412">
    <property type="term" value="P:translation"/>
    <property type="evidence" value="ECO:0007669"/>
    <property type="project" value="UniProtKB-UniRule"/>
</dbReference>
<dbReference type="FunFam" id="3.30.160.810:FF:000001">
    <property type="entry name" value="50S ribosomal protein L3"/>
    <property type="match status" value="1"/>
</dbReference>
<dbReference type="FunFam" id="2.40.30.10:FF:000065">
    <property type="entry name" value="50S ribosomal protein L3, chloroplastic"/>
    <property type="match status" value="1"/>
</dbReference>
<dbReference type="Gene3D" id="3.30.160.810">
    <property type="match status" value="1"/>
</dbReference>
<dbReference type="Gene3D" id="2.40.30.10">
    <property type="entry name" value="Translation factors"/>
    <property type="match status" value="1"/>
</dbReference>
<dbReference type="HAMAP" id="MF_01325_B">
    <property type="entry name" value="Ribosomal_uL3_B"/>
    <property type="match status" value="1"/>
</dbReference>
<dbReference type="InterPro" id="IPR000597">
    <property type="entry name" value="Ribosomal_uL3"/>
</dbReference>
<dbReference type="InterPro" id="IPR019927">
    <property type="entry name" value="Ribosomal_uL3_bac/org-type"/>
</dbReference>
<dbReference type="InterPro" id="IPR019926">
    <property type="entry name" value="Ribosomal_uL3_CS"/>
</dbReference>
<dbReference type="InterPro" id="IPR009000">
    <property type="entry name" value="Transl_B-barrel_sf"/>
</dbReference>
<dbReference type="NCBIfam" id="TIGR03625">
    <property type="entry name" value="L3_bact"/>
    <property type="match status" value="1"/>
</dbReference>
<dbReference type="PANTHER" id="PTHR11229">
    <property type="entry name" value="50S RIBOSOMAL PROTEIN L3"/>
    <property type="match status" value="1"/>
</dbReference>
<dbReference type="PANTHER" id="PTHR11229:SF16">
    <property type="entry name" value="LARGE RIBOSOMAL SUBUNIT PROTEIN UL3C"/>
    <property type="match status" value="1"/>
</dbReference>
<dbReference type="Pfam" id="PF00297">
    <property type="entry name" value="Ribosomal_L3"/>
    <property type="match status" value="1"/>
</dbReference>
<dbReference type="SUPFAM" id="SSF50447">
    <property type="entry name" value="Translation proteins"/>
    <property type="match status" value="1"/>
</dbReference>
<dbReference type="PROSITE" id="PS00474">
    <property type="entry name" value="RIBOSOMAL_L3"/>
    <property type="match status" value="1"/>
</dbReference>
<accession>B7K335</accession>
<name>RL3_RIPO1</name>
<protein>
    <recommendedName>
        <fullName evidence="1">Large ribosomal subunit protein uL3</fullName>
    </recommendedName>
    <alternativeName>
        <fullName evidence="3">50S ribosomal protein L3</fullName>
    </alternativeName>
</protein>
<comment type="function">
    <text evidence="1">One of the primary rRNA binding proteins, it binds directly near the 3'-end of the 23S rRNA, where it nucleates assembly of the 50S subunit.</text>
</comment>
<comment type="subunit">
    <text evidence="1">Part of the 50S ribosomal subunit. Forms a cluster with proteins L14 and L19.</text>
</comment>
<comment type="similarity">
    <text evidence="1">Belongs to the universal ribosomal protein uL3 family.</text>
</comment>
<keyword id="KW-1185">Reference proteome</keyword>
<keyword id="KW-0687">Ribonucleoprotein</keyword>
<keyword id="KW-0689">Ribosomal protein</keyword>
<keyword id="KW-0694">RNA-binding</keyword>
<keyword id="KW-0699">rRNA-binding</keyword>
<gene>
    <name evidence="1" type="primary">rplC</name>
    <name evidence="1" type="synonym">rpl3</name>
    <name type="ordered locus">PCC8801_0252</name>
</gene>
<reference key="1">
    <citation type="journal article" date="2011" name="MBio">
        <title>Novel metabolic attributes of the genus Cyanothece, comprising a group of unicellular nitrogen-fixing Cyanobacteria.</title>
        <authorList>
            <person name="Bandyopadhyay A."/>
            <person name="Elvitigala T."/>
            <person name="Welsh E."/>
            <person name="Stockel J."/>
            <person name="Liberton M."/>
            <person name="Min H."/>
            <person name="Sherman L.A."/>
            <person name="Pakrasi H.B."/>
        </authorList>
    </citation>
    <scope>NUCLEOTIDE SEQUENCE [LARGE SCALE GENOMIC DNA]</scope>
    <source>
        <strain>PCC 8801 / RF-1</strain>
    </source>
</reference>
<organism>
    <name type="scientific">Rippkaea orientalis (strain PCC 8801 / RF-1)</name>
    <name type="common">Cyanothece sp. (strain PCC 8801)</name>
    <dbReference type="NCBI Taxonomy" id="41431"/>
    <lineage>
        <taxon>Bacteria</taxon>
        <taxon>Bacillati</taxon>
        <taxon>Cyanobacteriota</taxon>
        <taxon>Cyanophyceae</taxon>
        <taxon>Oscillatoriophycideae</taxon>
        <taxon>Chroococcales</taxon>
        <taxon>Aphanothecaceae</taxon>
        <taxon>Rippkaea</taxon>
        <taxon>Rippkaea orientalis</taxon>
    </lineage>
</organism>